<sequence>MRIDKFLQSVGLVKRRVLATDMCNVGAVWLNGSCAKPSKEVKTGDVISLHYLKGIEEYTILQIPTLKNVPRKDTHLYIAPKTKE</sequence>
<accession>Q9ZJJ0</accession>
<reference key="1">
    <citation type="journal article" date="1999" name="Nature">
        <title>Genomic sequence comparison of two unrelated isolates of the human gastric pathogen Helicobacter pylori.</title>
        <authorList>
            <person name="Alm R.A."/>
            <person name="Ling L.-S.L."/>
            <person name="Moir D.T."/>
            <person name="King B.L."/>
            <person name="Brown E.D."/>
            <person name="Doig P.C."/>
            <person name="Smith D.R."/>
            <person name="Noonan B."/>
            <person name="Guild B.C."/>
            <person name="deJonge B.L."/>
            <person name="Carmel G."/>
            <person name="Tummino P.J."/>
            <person name="Caruso A."/>
            <person name="Uria-Nickelsen M."/>
            <person name="Mills D.M."/>
            <person name="Ives C."/>
            <person name="Gibson R."/>
            <person name="Merberg D."/>
            <person name="Mills S.D."/>
            <person name="Jiang Q."/>
            <person name="Taylor D.E."/>
            <person name="Vovis G.F."/>
            <person name="Trust T.J."/>
        </authorList>
    </citation>
    <scope>NUCLEOTIDE SEQUENCE [LARGE SCALE GENOMIC DNA]</scope>
    <source>
        <strain>J99 / ATCC 700824</strain>
    </source>
</reference>
<keyword id="KW-0648">Protein biosynthesis</keyword>
<keyword id="KW-0694">RNA-binding</keyword>
<keyword id="KW-0699">rRNA-binding</keyword>
<keyword id="KW-0820">tRNA-binding</keyword>
<proteinExistence type="inferred from homology"/>
<comment type="function">
    <text evidence="1">Key component of the ribosome quality control system (RQC), a ribosome-associated complex that mediates the extraction of incompletely synthesized nascent chains from stalled ribosomes and their subsequent degradation. RqcH recruits Ala-charged tRNA, and with RqcP directs the elongation of stalled nascent chains on 50S ribosomal subunits, leading to non-templated C-terminal alanine extensions (Ala tail). The Ala tail promotes nascent chain degradation. RqcP is associated with the translocation-like movement of the peptidyl-tRNA from the A-site into the P-site.</text>
</comment>
<comment type="subunit">
    <text evidence="1">Associates with stalled 50S ribosomal subunits. Binds to RqcH, 23S rRNA and the P-site tRNA. Does not require RqcH for association with 50S subunits.</text>
</comment>
<comment type="similarity">
    <text evidence="1">Belongs to the RqcP family.</text>
</comment>
<protein>
    <recommendedName>
        <fullName evidence="1">RQC P-site tRNA stabilizing factor</fullName>
        <shortName evidence="1">RqcP</shortName>
    </recommendedName>
    <alternativeName>
        <fullName evidence="1">Ribosome-associated protein quality control protein P</fullName>
    </alternativeName>
</protein>
<organism>
    <name type="scientific">Helicobacter pylori (strain J99 / ATCC 700824)</name>
    <name type="common">Campylobacter pylori J99</name>
    <dbReference type="NCBI Taxonomy" id="85963"/>
    <lineage>
        <taxon>Bacteria</taxon>
        <taxon>Pseudomonadati</taxon>
        <taxon>Campylobacterota</taxon>
        <taxon>Epsilonproteobacteria</taxon>
        <taxon>Campylobacterales</taxon>
        <taxon>Helicobacteraceae</taxon>
        <taxon>Helicobacter</taxon>
    </lineage>
</organism>
<dbReference type="EMBL" id="AE001439">
    <property type="protein sequence ID" value="AAD06891.1"/>
    <property type="molecule type" value="Genomic_DNA"/>
</dbReference>
<dbReference type="PIR" id="G71823">
    <property type="entry name" value="G71823"/>
</dbReference>
<dbReference type="RefSeq" id="WP_001217177.1">
    <property type="nucleotide sequence ID" value="NZ_CP011330.1"/>
</dbReference>
<dbReference type="SMR" id="Q9ZJJ0"/>
<dbReference type="KEGG" id="hpj:jhp_1318"/>
<dbReference type="PATRIC" id="fig|85963.30.peg.1244"/>
<dbReference type="eggNOG" id="COG1188">
    <property type="taxonomic scope" value="Bacteria"/>
</dbReference>
<dbReference type="Proteomes" id="UP000000804">
    <property type="component" value="Chromosome"/>
</dbReference>
<dbReference type="GO" id="GO:0019843">
    <property type="term" value="F:rRNA binding"/>
    <property type="evidence" value="ECO:0007669"/>
    <property type="project" value="UniProtKB-KW"/>
</dbReference>
<dbReference type="GO" id="GO:0000049">
    <property type="term" value="F:tRNA binding"/>
    <property type="evidence" value="ECO:0007669"/>
    <property type="project" value="UniProtKB-KW"/>
</dbReference>
<dbReference type="GO" id="GO:0006412">
    <property type="term" value="P:translation"/>
    <property type="evidence" value="ECO:0007669"/>
    <property type="project" value="UniProtKB-KW"/>
</dbReference>
<dbReference type="CDD" id="cd00165">
    <property type="entry name" value="S4"/>
    <property type="match status" value="1"/>
</dbReference>
<dbReference type="Gene3D" id="3.10.290.10">
    <property type="entry name" value="RNA-binding S4 domain"/>
    <property type="match status" value="1"/>
</dbReference>
<dbReference type="HAMAP" id="MF_00871">
    <property type="entry name" value="RqcP"/>
    <property type="match status" value="1"/>
</dbReference>
<dbReference type="InterPro" id="IPR025490">
    <property type="entry name" value="RqcP"/>
</dbReference>
<dbReference type="InterPro" id="IPR002942">
    <property type="entry name" value="S4_RNA-bd"/>
</dbReference>
<dbReference type="InterPro" id="IPR036986">
    <property type="entry name" value="S4_RNA-bd_sf"/>
</dbReference>
<dbReference type="Pfam" id="PF01479">
    <property type="entry name" value="S4"/>
    <property type="match status" value="1"/>
</dbReference>
<dbReference type="PIRSF" id="PIRSF038881">
    <property type="entry name" value="RNAbp_HP1423"/>
    <property type="match status" value="1"/>
</dbReference>
<dbReference type="SMART" id="SM00363">
    <property type="entry name" value="S4"/>
    <property type="match status" value="1"/>
</dbReference>
<dbReference type="SUPFAM" id="SSF55174">
    <property type="entry name" value="Alpha-L RNA-binding motif"/>
    <property type="match status" value="1"/>
</dbReference>
<dbReference type="PROSITE" id="PS50889">
    <property type="entry name" value="S4"/>
    <property type="match status" value="1"/>
</dbReference>
<gene>
    <name evidence="1" type="primary">rqcP</name>
    <name type="ordered locus">jhp_1318</name>
</gene>
<feature type="chain" id="PRO_0000201748" description="RQC P-site tRNA stabilizing factor">
    <location>
        <begin position="1"/>
        <end position="84"/>
    </location>
</feature>
<feature type="domain" description="S4 RNA-binding" evidence="1">
    <location>
        <begin position="1"/>
        <end position="64"/>
    </location>
</feature>
<name>RQCP_HELPJ</name>
<evidence type="ECO:0000255" key="1">
    <source>
        <dbReference type="HAMAP-Rule" id="MF_00871"/>
    </source>
</evidence>